<evidence type="ECO:0000255" key="1">
    <source>
        <dbReference type="HAMAP-Rule" id="MF_01220"/>
    </source>
</evidence>
<protein>
    <recommendedName>
        <fullName evidence="1">Uridylate kinase</fullName>
        <shortName evidence="1">UK</shortName>
        <ecNumber evidence="1">2.7.4.22</ecNumber>
    </recommendedName>
    <alternativeName>
        <fullName evidence="1">Uridine monophosphate kinase</fullName>
        <shortName evidence="1">UMP kinase</shortName>
        <shortName evidence="1">UMPK</shortName>
    </alternativeName>
</protein>
<gene>
    <name evidence="1" type="primary">pyrH</name>
    <name type="ordered locus">M6_Spy0404</name>
</gene>
<reference key="1">
    <citation type="journal article" date="2004" name="J. Infect. Dis.">
        <title>Progress toward characterization of the group A Streptococcus metagenome: complete genome sequence of a macrolide-resistant serotype M6 strain.</title>
        <authorList>
            <person name="Banks D.J."/>
            <person name="Porcella S.F."/>
            <person name="Barbian K.D."/>
            <person name="Beres S.B."/>
            <person name="Philips L.E."/>
            <person name="Voyich J.M."/>
            <person name="DeLeo F.R."/>
            <person name="Martin J.M."/>
            <person name="Somerville G.A."/>
            <person name="Musser J.M."/>
        </authorList>
    </citation>
    <scope>NUCLEOTIDE SEQUENCE [LARGE SCALE GENOMIC DNA]</scope>
    <source>
        <strain>ATCC BAA-946 / MGAS10394</strain>
    </source>
</reference>
<comment type="function">
    <text evidence="1">Catalyzes the reversible phosphorylation of UMP to UDP.</text>
</comment>
<comment type="catalytic activity">
    <reaction evidence="1">
        <text>UMP + ATP = UDP + ADP</text>
        <dbReference type="Rhea" id="RHEA:24400"/>
        <dbReference type="ChEBI" id="CHEBI:30616"/>
        <dbReference type="ChEBI" id="CHEBI:57865"/>
        <dbReference type="ChEBI" id="CHEBI:58223"/>
        <dbReference type="ChEBI" id="CHEBI:456216"/>
        <dbReference type="EC" id="2.7.4.22"/>
    </reaction>
</comment>
<comment type="activity regulation">
    <text evidence="1">Allosterically activated by GTP. Inhibited by UTP.</text>
</comment>
<comment type="pathway">
    <text evidence="1">Pyrimidine metabolism; CTP biosynthesis via de novo pathway; UDP from UMP (UMPK route): step 1/1.</text>
</comment>
<comment type="subunit">
    <text evidence="1">Homohexamer.</text>
</comment>
<comment type="subcellular location">
    <subcellularLocation>
        <location evidence="1">Cytoplasm</location>
    </subcellularLocation>
</comment>
<comment type="similarity">
    <text evidence="1">Belongs to the UMP kinase family.</text>
</comment>
<proteinExistence type="inferred from homology"/>
<organism>
    <name type="scientific">Streptococcus pyogenes serotype M6 (strain ATCC BAA-946 / MGAS10394)</name>
    <dbReference type="NCBI Taxonomy" id="286636"/>
    <lineage>
        <taxon>Bacteria</taxon>
        <taxon>Bacillati</taxon>
        <taxon>Bacillota</taxon>
        <taxon>Bacilli</taxon>
        <taxon>Lactobacillales</taxon>
        <taxon>Streptococcaceae</taxon>
        <taxon>Streptococcus</taxon>
    </lineage>
</organism>
<name>PYRH_STRP6</name>
<accession>Q5XDH4</accession>
<keyword id="KW-0021">Allosteric enzyme</keyword>
<keyword id="KW-0067">ATP-binding</keyword>
<keyword id="KW-0963">Cytoplasm</keyword>
<keyword id="KW-0418">Kinase</keyword>
<keyword id="KW-0547">Nucleotide-binding</keyword>
<keyword id="KW-0665">Pyrimidine biosynthesis</keyword>
<keyword id="KW-0808">Transferase</keyword>
<dbReference type="EC" id="2.7.4.22" evidence="1"/>
<dbReference type="EMBL" id="CP000003">
    <property type="protein sequence ID" value="AAT86539.1"/>
    <property type="molecule type" value="Genomic_DNA"/>
</dbReference>
<dbReference type="RefSeq" id="WP_002985765.1">
    <property type="nucleotide sequence ID" value="NC_006086.1"/>
</dbReference>
<dbReference type="SMR" id="Q5XDH4"/>
<dbReference type="GeneID" id="69901300"/>
<dbReference type="KEGG" id="spa:M6_Spy0404"/>
<dbReference type="HOGENOM" id="CLU_033861_0_0_9"/>
<dbReference type="UniPathway" id="UPA00159">
    <property type="reaction ID" value="UER00275"/>
</dbReference>
<dbReference type="Proteomes" id="UP000001167">
    <property type="component" value="Chromosome"/>
</dbReference>
<dbReference type="GO" id="GO:0005737">
    <property type="term" value="C:cytoplasm"/>
    <property type="evidence" value="ECO:0007669"/>
    <property type="project" value="UniProtKB-SubCell"/>
</dbReference>
<dbReference type="GO" id="GO:0005524">
    <property type="term" value="F:ATP binding"/>
    <property type="evidence" value="ECO:0007669"/>
    <property type="project" value="UniProtKB-KW"/>
</dbReference>
<dbReference type="GO" id="GO:0033862">
    <property type="term" value="F:UMP kinase activity"/>
    <property type="evidence" value="ECO:0007669"/>
    <property type="project" value="UniProtKB-EC"/>
</dbReference>
<dbReference type="GO" id="GO:0044210">
    <property type="term" value="P:'de novo' CTP biosynthetic process"/>
    <property type="evidence" value="ECO:0007669"/>
    <property type="project" value="UniProtKB-UniRule"/>
</dbReference>
<dbReference type="GO" id="GO:0006225">
    <property type="term" value="P:UDP biosynthetic process"/>
    <property type="evidence" value="ECO:0007669"/>
    <property type="project" value="TreeGrafter"/>
</dbReference>
<dbReference type="CDD" id="cd04254">
    <property type="entry name" value="AAK_UMPK-PyrH-Ec"/>
    <property type="match status" value="1"/>
</dbReference>
<dbReference type="FunFam" id="3.40.1160.10:FF:000019">
    <property type="entry name" value="Uridylate kinase"/>
    <property type="match status" value="1"/>
</dbReference>
<dbReference type="Gene3D" id="3.40.1160.10">
    <property type="entry name" value="Acetylglutamate kinase-like"/>
    <property type="match status" value="1"/>
</dbReference>
<dbReference type="HAMAP" id="MF_01220_B">
    <property type="entry name" value="PyrH_B"/>
    <property type="match status" value="1"/>
</dbReference>
<dbReference type="InterPro" id="IPR036393">
    <property type="entry name" value="AceGlu_kinase-like_sf"/>
</dbReference>
<dbReference type="InterPro" id="IPR001048">
    <property type="entry name" value="Asp/Glu/Uridylate_kinase"/>
</dbReference>
<dbReference type="InterPro" id="IPR011817">
    <property type="entry name" value="Uridylate_kinase"/>
</dbReference>
<dbReference type="InterPro" id="IPR015963">
    <property type="entry name" value="Uridylate_kinase_bac"/>
</dbReference>
<dbReference type="NCBIfam" id="TIGR02075">
    <property type="entry name" value="pyrH_bact"/>
    <property type="match status" value="1"/>
</dbReference>
<dbReference type="PANTHER" id="PTHR42833">
    <property type="entry name" value="URIDYLATE KINASE"/>
    <property type="match status" value="1"/>
</dbReference>
<dbReference type="PANTHER" id="PTHR42833:SF4">
    <property type="entry name" value="URIDYLATE KINASE PUMPKIN, CHLOROPLASTIC"/>
    <property type="match status" value="1"/>
</dbReference>
<dbReference type="Pfam" id="PF00696">
    <property type="entry name" value="AA_kinase"/>
    <property type="match status" value="1"/>
</dbReference>
<dbReference type="PIRSF" id="PIRSF005650">
    <property type="entry name" value="Uridylate_kin"/>
    <property type="match status" value="1"/>
</dbReference>
<dbReference type="SUPFAM" id="SSF53633">
    <property type="entry name" value="Carbamate kinase-like"/>
    <property type="match status" value="1"/>
</dbReference>
<feature type="chain" id="PRO_0000143896" description="Uridylate kinase">
    <location>
        <begin position="1"/>
        <end position="242"/>
    </location>
</feature>
<feature type="region of interest" description="Involved in allosteric activation by GTP" evidence="1">
    <location>
        <begin position="19"/>
        <end position="24"/>
    </location>
</feature>
<feature type="binding site" evidence="1">
    <location>
        <begin position="11"/>
        <end position="14"/>
    </location>
    <ligand>
        <name>ATP</name>
        <dbReference type="ChEBI" id="CHEBI:30616"/>
    </ligand>
</feature>
<feature type="binding site" evidence="1">
    <location>
        <position position="53"/>
    </location>
    <ligand>
        <name>UMP</name>
        <dbReference type="ChEBI" id="CHEBI:57865"/>
    </ligand>
</feature>
<feature type="binding site" evidence="1">
    <location>
        <position position="54"/>
    </location>
    <ligand>
        <name>ATP</name>
        <dbReference type="ChEBI" id="CHEBI:30616"/>
    </ligand>
</feature>
<feature type="binding site" evidence="1">
    <location>
        <position position="58"/>
    </location>
    <ligand>
        <name>ATP</name>
        <dbReference type="ChEBI" id="CHEBI:30616"/>
    </ligand>
</feature>
<feature type="binding site" evidence="1">
    <location>
        <position position="73"/>
    </location>
    <ligand>
        <name>UMP</name>
        <dbReference type="ChEBI" id="CHEBI:57865"/>
    </ligand>
</feature>
<feature type="binding site" evidence="1">
    <location>
        <begin position="134"/>
        <end position="141"/>
    </location>
    <ligand>
        <name>UMP</name>
        <dbReference type="ChEBI" id="CHEBI:57865"/>
    </ligand>
</feature>
<feature type="binding site" evidence="1">
    <location>
        <position position="162"/>
    </location>
    <ligand>
        <name>ATP</name>
        <dbReference type="ChEBI" id="CHEBI:30616"/>
    </ligand>
</feature>
<feature type="binding site" evidence="1">
    <location>
        <position position="168"/>
    </location>
    <ligand>
        <name>ATP</name>
        <dbReference type="ChEBI" id="CHEBI:30616"/>
    </ligand>
</feature>
<feature type="binding site" evidence="1">
    <location>
        <position position="171"/>
    </location>
    <ligand>
        <name>ATP</name>
        <dbReference type="ChEBI" id="CHEBI:30616"/>
    </ligand>
</feature>
<sequence length="242" mass="25896">MEPKYQRILIKLSGEALAGEKGVGIDIPTVQAIAKEIAEVHVSGVQIALVIGGGNLWRGEPAADAGMDRVQADYTGMLGTVMNALVMADSLQHYGVDTRVQTAIPMQNVAEPYIRGRALRHLEKNRIVVFGAGIGSPYFSTDTTAALRAAEIEADAILMAKNGVDGVYNADPKKDANAVKFDELTHGEVIKRGLKIMDATASTLSMDNDIDLVVFNMNEAGNIQRVVFGEHIGTTVSNKVCD</sequence>